<sequence>MNEIFKTLQIIAKKISEEVKYADFGYTNHQNSTGDTQLKLDVKSDSIIEAEFRKISSVKSLVSEEKEDELVLNENAKFIIAYDPLDGSSLVDVNFAVGSIFGIYENEIKAENLKAAAYIIYGPRLEMVFTDGNAPKFYRLQKDGNFAFINELKLENKGKLNATGATQKNWSQTHRNFIRSLFDEGYRLRYSGAMVADLHQILMKKGGIFSYPATSDHPNGKLRVSFEVLPFAFIYEKAGGATSDGKSQSLFSIKISKIHQTTPCFFGSKYEIERLHEIYG</sequence>
<proteinExistence type="inferred from homology"/>
<organism>
    <name type="scientific">Campylobacter hominis (strain ATCC BAA-381 / DSM 21671 / CCUG 45161 / LMG 19568 / NCTC 13146 / CH001A)</name>
    <dbReference type="NCBI Taxonomy" id="360107"/>
    <lineage>
        <taxon>Bacteria</taxon>
        <taxon>Pseudomonadati</taxon>
        <taxon>Campylobacterota</taxon>
        <taxon>Epsilonproteobacteria</taxon>
        <taxon>Campylobacterales</taxon>
        <taxon>Campylobacteraceae</taxon>
        <taxon>Campylobacter</taxon>
    </lineage>
</organism>
<feature type="chain" id="PRO_0000364511" description="Fructose-1,6-bisphosphatase class 1">
    <location>
        <begin position="1"/>
        <end position="280"/>
    </location>
</feature>
<feature type="binding site" evidence="1">
    <location>
        <position position="64"/>
    </location>
    <ligand>
        <name>Mg(2+)</name>
        <dbReference type="ChEBI" id="CHEBI:18420"/>
        <label>1</label>
    </ligand>
</feature>
<feature type="binding site" evidence="1">
    <location>
        <position position="83"/>
    </location>
    <ligand>
        <name>Mg(2+)</name>
        <dbReference type="ChEBI" id="CHEBI:18420"/>
        <label>1</label>
    </ligand>
</feature>
<feature type="binding site" evidence="1">
    <location>
        <position position="83"/>
    </location>
    <ligand>
        <name>Mg(2+)</name>
        <dbReference type="ChEBI" id="CHEBI:18420"/>
        <label>2</label>
    </ligand>
</feature>
<feature type="binding site" evidence="1">
    <location>
        <position position="85"/>
    </location>
    <ligand>
        <name>Mg(2+)</name>
        <dbReference type="ChEBI" id="CHEBI:18420"/>
        <label>1</label>
    </ligand>
</feature>
<feature type="binding site" evidence="1">
    <location>
        <begin position="86"/>
        <end position="89"/>
    </location>
    <ligand>
        <name>substrate</name>
    </ligand>
</feature>
<feature type="binding site" evidence="1">
    <location>
        <position position="86"/>
    </location>
    <ligand>
        <name>Mg(2+)</name>
        <dbReference type="ChEBI" id="CHEBI:18420"/>
        <label>2</label>
    </ligand>
</feature>
<feature type="binding site" evidence="1">
    <location>
        <position position="190"/>
    </location>
    <ligand>
        <name>substrate</name>
    </ligand>
</feature>
<feature type="binding site" evidence="1">
    <location>
        <position position="221"/>
    </location>
    <ligand>
        <name>substrate</name>
    </ligand>
</feature>
<feature type="binding site" evidence="1">
    <location>
        <position position="227"/>
    </location>
    <ligand>
        <name>Mg(2+)</name>
        <dbReference type="ChEBI" id="CHEBI:18420"/>
        <label>2</label>
    </ligand>
</feature>
<name>F16PA_CAMHC</name>
<comment type="catalytic activity">
    <reaction evidence="1">
        <text>beta-D-fructose 1,6-bisphosphate + H2O = beta-D-fructose 6-phosphate + phosphate</text>
        <dbReference type="Rhea" id="RHEA:11064"/>
        <dbReference type="ChEBI" id="CHEBI:15377"/>
        <dbReference type="ChEBI" id="CHEBI:32966"/>
        <dbReference type="ChEBI" id="CHEBI:43474"/>
        <dbReference type="ChEBI" id="CHEBI:57634"/>
        <dbReference type="EC" id="3.1.3.11"/>
    </reaction>
</comment>
<comment type="cofactor">
    <cofactor evidence="1">
        <name>Mg(2+)</name>
        <dbReference type="ChEBI" id="CHEBI:18420"/>
    </cofactor>
    <text evidence="1">Binds 2 magnesium ions per subunit.</text>
</comment>
<comment type="pathway">
    <text evidence="1">Carbohydrate biosynthesis; gluconeogenesis.</text>
</comment>
<comment type="subunit">
    <text evidence="1">Homotetramer.</text>
</comment>
<comment type="subcellular location">
    <subcellularLocation>
        <location evidence="1">Cytoplasm</location>
    </subcellularLocation>
</comment>
<comment type="similarity">
    <text evidence="1">Belongs to the FBPase class 1 family.</text>
</comment>
<evidence type="ECO:0000255" key="1">
    <source>
        <dbReference type="HAMAP-Rule" id="MF_01855"/>
    </source>
</evidence>
<dbReference type="EC" id="3.1.3.11" evidence="1"/>
<dbReference type="EMBL" id="CP000776">
    <property type="protein sequence ID" value="ABS51020.1"/>
    <property type="molecule type" value="Genomic_DNA"/>
</dbReference>
<dbReference type="RefSeq" id="WP_012108597.1">
    <property type="nucleotide sequence ID" value="NC_009714.1"/>
</dbReference>
<dbReference type="SMR" id="A7I1B8"/>
<dbReference type="STRING" id="360107.CHAB381_0729"/>
<dbReference type="KEGG" id="cha:CHAB381_0729"/>
<dbReference type="eggNOG" id="COG0158">
    <property type="taxonomic scope" value="Bacteria"/>
</dbReference>
<dbReference type="HOGENOM" id="CLU_039977_0_0_7"/>
<dbReference type="OrthoDB" id="9806756at2"/>
<dbReference type="UniPathway" id="UPA00138"/>
<dbReference type="Proteomes" id="UP000002407">
    <property type="component" value="Chromosome"/>
</dbReference>
<dbReference type="GO" id="GO:0005829">
    <property type="term" value="C:cytosol"/>
    <property type="evidence" value="ECO:0007669"/>
    <property type="project" value="TreeGrafter"/>
</dbReference>
<dbReference type="GO" id="GO:0042132">
    <property type="term" value="F:fructose 1,6-bisphosphate 1-phosphatase activity"/>
    <property type="evidence" value="ECO:0007669"/>
    <property type="project" value="UniProtKB-UniRule"/>
</dbReference>
<dbReference type="GO" id="GO:0000287">
    <property type="term" value="F:magnesium ion binding"/>
    <property type="evidence" value="ECO:0007669"/>
    <property type="project" value="UniProtKB-UniRule"/>
</dbReference>
<dbReference type="GO" id="GO:0030388">
    <property type="term" value="P:fructose 1,6-bisphosphate metabolic process"/>
    <property type="evidence" value="ECO:0007669"/>
    <property type="project" value="TreeGrafter"/>
</dbReference>
<dbReference type="GO" id="GO:0006002">
    <property type="term" value="P:fructose 6-phosphate metabolic process"/>
    <property type="evidence" value="ECO:0007669"/>
    <property type="project" value="TreeGrafter"/>
</dbReference>
<dbReference type="GO" id="GO:0006000">
    <property type="term" value="P:fructose metabolic process"/>
    <property type="evidence" value="ECO:0007669"/>
    <property type="project" value="TreeGrafter"/>
</dbReference>
<dbReference type="GO" id="GO:0006094">
    <property type="term" value="P:gluconeogenesis"/>
    <property type="evidence" value="ECO:0007669"/>
    <property type="project" value="UniProtKB-UniRule"/>
</dbReference>
<dbReference type="GO" id="GO:0005986">
    <property type="term" value="P:sucrose biosynthetic process"/>
    <property type="evidence" value="ECO:0007669"/>
    <property type="project" value="TreeGrafter"/>
</dbReference>
<dbReference type="Gene3D" id="3.40.190.80">
    <property type="match status" value="1"/>
</dbReference>
<dbReference type="Gene3D" id="3.30.540.10">
    <property type="entry name" value="Fructose-1,6-Bisphosphatase, subunit A, domain 1"/>
    <property type="match status" value="1"/>
</dbReference>
<dbReference type="HAMAP" id="MF_01855">
    <property type="entry name" value="FBPase_class1"/>
    <property type="match status" value="1"/>
</dbReference>
<dbReference type="InterPro" id="IPR044015">
    <property type="entry name" value="FBPase_C_dom"/>
</dbReference>
<dbReference type="InterPro" id="IPR000146">
    <property type="entry name" value="FBPase_class-1"/>
</dbReference>
<dbReference type="InterPro" id="IPR033391">
    <property type="entry name" value="FBPase_N"/>
</dbReference>
<dbReference type="InterPro" id="IPR028343">
    <property type="entry name" value="FBPtase"/>
</dbReference>
<dbReference type="InterPro" id="IPR023079">
    <property type="entry name" value="SBPase"/>
</dbReference>
<dbReference type="NCBIfam" id="NF006782">
    <property type="entry name" value="PRK09293.2-3"/>
    <property type="match status" value="1"/>
</dbReference>
<dbReference type="NCBIfam" id="NF006784">
    <property type="entry name" value="PRK09293.2-5"/>
    <property type="match status" value="1"/>
</dbReference>
<dbReference type="PANTHER" id="PTHR11556">
    <property type="entry name" value="FRUCTOSE-1,6-BISPHOSPHATASE-RELATED"/>
    <property type="match status" value="1"/>
</dbReference>
<dbReference type="PANTHER" id="PTHR11556:SF35">
    <property type="entry name" value="SEDOHEPTULOSE-1,7-BISPHOSPHATASE, CHLOROPLASTIC"/>
    <property type="match status" value="1"/>
</dbReference>
<dbReference type="Pfam" id="PF00316">
    <property type="entry name" value="FBPase"/>
    <property type="match status" value="1"/>
</dbReference>
<dbReference type="Pfam" id="PF18913">
    <property type="entry name" value="FBPase_C"/>
    <property type="match status" value="1"/>
</dbReference>
<dbReference type="PIRSF" id="PIRSF500210">
    <property type="entry name" value="FBPtase"/>
    <property type="match status" value="1"/>
</dbReference>
<dbReference type="PIRSF" id="PIRSF000904">
    <property type="entry name" value="FBPtase_SBPase"/>
    <property type="match status" value="1"/>
</dbReference>
<dbReference type="PRINTS" id="PR01958">
    <property type="entry name" value="S17BPHPHTASE"/>
</dbReference>
<dbReference type="SUPFAM" id="SSF56655">
    <property type="entry name" value="Carbohydrate phosphatase"/>
    <property type="match status" value="1"/>
</dbReference>
<reference key="1">
    <citation type="submission" date="2007-07" db="EMBL/GenBank/DDBJ databases">
        <title>Complete genome sequence of Campylobacter hominis ATCC BAA-381, a commensal isolated from the human gastrointestinal tract.</title>
        <authorList>
            <person name="Fouts D.E."/>
            <person name="Mongodin E.F."/>
            <person name="Puiu D."/>
            <person name="Sebastian Y."/>
            <person name="Miller W.G."/>
            <person name="Mandrell R.E."/>
            <person name="Nelson K.E."/>
        </authorList>
    </citation>
    <scope>NUCLEOTIDE SEQUENCE [LARGE SCALE GENOMIC DNA]</scope>
    <source>
        <strain>ATCC BAA-381 / DSM 21671 / CCUG 45161 / LMG 19568 / NCTC 13146 / CH001A</strain>
    </source>
</reference>
<keyword id="KW-0119">Carbohydrate metabolism</keyword>
<keyword id="KW-0963">Cytoplasm</keyword>
<keyword id="KW-0378">Hydrolase</keyword>
<keyword id="KW-0460">Magnesium</keyword>
<keyword id="KW-0479">Metal-binding</keyword>
<keyword id="KW-1185">Reference proteome</keyword>
<protein>
    <recommendedName>
        <fullName evidence="1">Fructose-1,6-bisphosphatase class 1</fullName>
        <shortName evidence="1">FBPase class 1</shortName>
        <ecNumber evidence="1">3.1.3.11</ecNumber>
    </recommendedName>
    <alternativeName>
        <fullName evidence="1">D-fructose-1,6-bisphosphate 1-phosphohydrolase class 1</fullName>
    </alternativeName>
</protein>
<gene>
    <name evidence="1" type="primary">fbp</name>
    <name type="ordered locus">CHAB381_0729</name>
</gene>
<accession>A7I1B8</accession>